<protein>
    <recommendedName>
        <fullName evidence="7">Endothelin receptor type B</fullName>
        <shortName>ET-B</shortName>
        <shortName>ET-BR</shortName>
    </recommendedName>
    <alternativeName>
        <fullName>Endothelin receptor non-selective type</fullName>
    </alternativeName>
</protein>
<keyword id="KW-1003">Cell membrane</keyword>
<keyword id="KW-1015">Disulfide bond</keyword>
<keyword id="KW-0297">G-protein coupled receptor</keyword>
<keyword id="KW-0325">Glycoprotein</keyword>
<keyword id="KW-0449">Lipoprotein</keyword>
<keyword id="KW-0472">Membrane</keyword>
<keyword id="KW-0564">Palmitate</keyword>
<keyword id="KW-0597">Phosphoprotein</keyword>
<keyword id="KW-0675">Receptor</keyword>
<keyword id="KW-1185">Reference proteome</keyword>
<keyword id="KW-0732">Signal</keyword>
<keyword id="KW-0807">Transducer</keyword>
<keyword id="KW-0812">Transmembrane</keyword>
<keyword id="KW-1133">Transmembrane helix</keyword>
<gene>
    <name type="primary">EDNRB</name>
</gene>
<proteinExistence type="evidence at transcript level"/>
<dbReference type="EMBL" id="AF245469">
    <property type="protein sequence ID" value="AAF60366.1"/>
    <property type="molecule type" value="mRNA"/>
</dbReference>
<dbReference type="RefSeq" id="NP_001076190.1">
    <property type="nucleotide sequence ID" value="NM_001082721.1"/>
</dbReference>
<dbReference type="SMR" id="Q9N0W7"/>
<dbReference type="FunCoup" id="Q9N0W7">
    <property type="interactions" value="280"/>
</dbReference>
<dbReference type="STRING" id="9986.ENSOCUP00000015272"/>
<dbReference type="ChEMBL" id="CHEMBL2259248"/>
<dbReference type="GlyCosmos" id="Q9N0W7">
    <property type="glycosylation" value="1 site, No reported glycans"/>
</dbReference>
<dbReference type="PaxDb" id="9986-ENSOCUP00000015272"/>
<dbReference type="GeneID" id="100009477"/>
<dbReference type="KEGG" id="ocu:100009477"/>
<dbReference type="CTD" id="1910"/>
<dbReference type="eggNOG" id="KOG3656">
    <property type="taxonomic scope" value="Eukaryota"/>
</dbReference>
<dbReference type="InParanoid" id="Q9N0W7"/>
<dbReference type="OrthoDB" id="10037617at2759"/>
<dbReference type="Proteomes" id="UP000001811">
    <property type="component" value="Unplaced"/>
</dbReference>
<dbReference type="GO" id="GO:0005886">
    <property type="term" value="C:plasma membrane"/>
    <property type="evidence" value="ECO:0000250"/>
    <property type="project" value="UniProtKB"/>
</dbReference>
<dbReference type="GO" id="GO:0004962">
    <property type="term" value="F:endothelin receptor activity"/>
    <property type="evidence" value="ECO:0000250"/>
    <property type="project" value="UniProtKB"/>
</dbReference>
<dbReference type="GO" id="GO:0019722">
    <property type="term" value="P:calcium-mediated signaling"/>
    <property type="evidence" value="ECO:0000250"/>
    <property type="project" value="UniProtKB"/>
</dbReference>
<dbReference type="GO" id="GO:0048066">
    <property type="term" value="P:developmental pigmentation"/>
    <property type="evidence" value="ECO:0007669"/>
    <property type="project" value="TreeGrafter"/>
</dbReference>
<dbReference type="GO" id="GO:0086100">
    <property type="term" value="P:endothelin receptor signaling pathway"/>
    <property type="evidence" value="ECO:0000250"/>
    <property type="project" value="UniProtKB"/>
</dbReference>
<dbReference type="GO" id="GO:0048484">
    <property type="term" value="P:enteric nervous system development"/>
    <property type="evidence" value="ECO:0007669"/>
    <property type="project" value="InterPro"/>
</dbReference>
<dbReference type="GO" id="GO:0008217">
    <property type="term" value="P:regulation of blood pressure"/>
    <property type="evidence" value="ECO:0007669"/>
    <property type="project" value="InterPro"/>
</dbReference>
<dbReference type="GO" id="GO:0042310">
    <property type="term" value="P:vasoconstriction"/>
    <property type="evidence" value="ECO:0007669"/>
    <property type="project" value="InterPro"/>
</dbReference>
<dbReference type="CDD" id="cd15976">
    <property type="entry name" value="7tmA_ET-BR"/>
    <property type="match status" value="1"/>
</dbReference>
<dbReference type="FunFam" id="1.20.1070.10:FF:000076">
    <property type="entry name" value="Endothelin receptor type B"/>
    <property type="match status" value="1"/>
</dbReference>
<dbReference type="Gene3D" id="1.20.1070.10">
    <property type="entry name" value="Rhodopsin 7-helix transmembrane proteins"/>
    <property type="match status" value="1"/>
</dbReference>
<dbReference type="InterPro" id="IPR000499">
    <property type="entry name" value="Endthln_rcpt"/>
</dbReference>
<dbReference type="InterPro" id="IPR001112">
    <property type="entry name" value="ETB_rcpt"/>
</dbReference>
<dbReference type="InterPro" id="IPR051193">
    <property type="entry name" value="GPCR_endothelin_rcpt"/>
</dbReference>
<dbReference type="InterPro" id="IPR000276">
    <property type="entry name" value="GPCR_Rhodpsn"/>
</dbReference>
<dbReference type="InterPro" id="IPR017452">
    <property type="entry name" value="GPCR_Rhodpsn_7TM"/>
</dbReference>
<dbReference type="PANTHER" id="PTHR46099:SF3">
    <property type="entry name" value="ENDOTHELIN RECEPTOR TYPE B"/>
    <property type="match status" value="1"/>
</dbReference>
<dbReference type="PANTHER" id="PTHR46099">
    <property type="entry name" value="G_PROTEIN_RECEP_F1_2 DOMAIN-CONTAINING PROTEIN"/>
    <property type="match status" value="1"/>
</dbReference>
<dbReference type="Pfam" id="PF00001">
    <property type="entry name" value="7tm_1"/>
    <property type="match status" value="1"/>
</dbReference>
<dbReference type="PRINTS" id="PR00571">
    <property type="entry name" value="ENDOTHELINBR"/>
</dbReference>
<dbReference type="PRINTS" id="PR00366">
    <property type="entry name" value="ENDOTHELINR"/>
</dbReference>
<dbReference type="PRINTS" id="PR00237">
    <property type="entry name" value="GPCRRHODOPSN"/>
</dbReference>
<dbReference type="SMART" id="SM01381">
    <property type="entry name" value="7TM_GPCR_Srsx"/>
    <property type="match status" value="1"/>
</dbReference>
<dbReference type="SUPFAM" id="SSF81321">
    <property type="entry name" value="Family A G protein-coupled receptor-like"/>
    <property type="match status" value="1"/>
</dbReference>
<dbReference type="PROSITE" id="PS00237">
    <property type="entry name" value="G_PROTEIN_RECEP_F1_1"/>
    <property type="match status" value="1"/>
</dbReference>
<dbReference type="PROSITE" id="PS50262">
    <property type="entry name" value="G_PROTEIN_RECEP_F1_2"/>
    <property type="match status" value="1"/>
</dbReference>
<comment type="function">
    <text evidence="1">Non-specific receptor for endothelin 1, 2, and 3. Mediates its action by association with G proteins that activate a phosphatidylinositol-calcium second messenger system (By similarity).</text>
</comment>
<comment type="subcellular location">
    <subcellularLocation>
        <location evidence="2">Cell membrane</location>
        <topology>Multi-pass membrane protein</topology>
    </subcellularLocation>
    <text evidence="2">internalized after activation by endothelins.</text>
</comment>
<comment type="similarity">
    <text evidence="5">Belongs to the G-protein coupled receptor 1 family. Endothelin receptor subfamily. EDNRB sub-subfamily.</text>
</comment>
<accession>Q9N0W7</accession>
<reference key="1">
    <citation type="submission" date="2000-03" db="EMBL/GenBank/DDBJ databases">
        <authorList>
            <person name="Yang L."/>
            <person name="Wu Q."/>
            <person name="Yang N."/>
            <person name="Long Q."/>
            <person name="Wang X."/>
        </authorList>
    </citation>
    <scope>NUCLEOTIDE SEQUENCE [MRNA]</scope>
</reference>
<name>EDNRB_RABIT</name>
<evidence type="ECO:0000250" key="1"/>
<evidence type="ECO:0000250" key="2">
    <source>
        <dbReference type="UniProtKB" id="P24530"/>
    </source>
</evidence>
<evidence type="ECO:0000250" key="3">
    <source>
        <dbReference type="UniProtKB" id="P28088"/>
    </source>
</evidence>
<evidence type="ECO:0000255" key="4"/>
<evidence type="ECO:0000255" key="5">
    <source>
        <dbReference type="PROSITE-ProRule" id="PRU00521"/>
    </source>
</evidence>
<evidence type="ECO:0000256" key="6">
    <source>
        <dbReference type="SAM" id="MobiDB-lite"/>
    </source>
</evidence>
<evidence type="ECO:0000305" key="7"/>
<organism>
    <name type="scientific">Oryctolagus cuniculus</name>
    <name type="common">Rabbit</name>
    <dbReference type="NCBI Taxonomy" id="9986"/>
    <lineage>
        <taxon>Eukaryota</taxon>
        <taxon>Metazoa</taxon>
        <taxon>Chordata</taxon>
        <taxon>Craniata</taxon>
        <taxon>Vertebrata</taxon>
        <taxon>Euteleostomi</taxon>
        <taxon>Mammalia</taxon>
        <taxon>Eutheria</taxon>
        <taxon>Euarchontoglires</taxon>
        <taxon>Glires</taxon>
        <taxon>Lagomorpha</taxon>
        <taxon>Leporidae</taxon>
        <taxon>Oryctolagus</taxon>
    </lineage>
</organism>
<sequence length="441" mass="49441">MQPPPSLCGLALLALVLACGMAEVWGEEREMPSAPATPPLLGASEILTPSTKTSWPRDSNASLPRSSAPAEIPKEGRTAGAPRRTPPPCQRPTEIKDTFKYINTVVSCLVFVLGIIGNSTLLRIIYKNKCMRNGPNILIASLALGDLLHIIIDIPINVYKLLAEDWPFGAEMCKLVPFIQKASVGITVLSLCALSIDRYRAVASWSRIKGIGVPKWTAVEIVLIWVVSVILAVPEAIGFNLVTIDYKGSYLRICLLNPTQKTAFMQFYKTAKDWWLFSFYFCLPLAITAFFYTLMTCEMLRKKSGMQIALNDHLKQRREVAKTVFCLVLVFGLCWLALHLSRILKLTLYDQNDPNRCELLSFLLVLDYIGINMASLNSCINPIALYLVSKRFKNCFKSCLCCWCQSFEEKQSLEEKQSCLKFKANDHGYDNFRSSNKYSSS</sequence>
<feature type="signal peptide" evidence="1">
    <location>
        <begin position="1"/>
        <end position="26"/>
    </location>
</feature>
<feature type="chain" id="PRO_0000012732" description="Endothelin receptor type B">
    <location>
        <begin position="27"/>
        <end position="441"/>
    </location>
</feature>
<feature type="topological domain" description="Extracellular" evidence="4">
    <location>
        <begin position="27"/>
        <end position="100"/>
    </location>
</feature>
<feature type="transmembrane region" description="Helical; Name=1" evidence="4">
    <location>
        <begin position="101"/>
        <end position="125"/>
    </location>
</feature>
<feature type="topological domain" description="Cytoplasmic" evidence="4">
    <location>
        <begin position="126"/>
        <end position="136"/>
    </location>
</feature>
<feature type="transmembrane region" description="Helical; Name=2" evidence="4">
    <location>
        <begin position="137"/>
        <end position="162"/>
    </location>
</feature>
<feature type="topological domain" description="Extracellular" evidence="4">
    <location>
        <begin position="163"/>
        <end position="174"/>
    </location>
</feature>
<feature type="transmembrane region" description="Helical; Name=3" evidence="4">
    <location>
        <begin position="175"/>
        <end position="196"/>
    </location>
</feature>
<feature type="topological domain" description="Cytoplasmic" evidence="4">
    <location>
        <begin position="197"/>
        <end position="217"/>
    </location>
</feature>
<feature type="transmembrane region" description="Helical; Name=4" evidence="4">
    <location>
        <begin position="218"/>
        <end position="242"/>
    </location>
</feature>
<feature type="topological domain" description="Extracellular" evidence="4">
    <location>
        <begin position="243"/>
        <end position="270"/>
    </location>
</feature>
<feature type="transmembrane region" description="Helical; Name=5" evidence="4">
    <location>
        <begin position="271"/>
        <end position="295"/>
    </location>
</feature>
<feature type="topological domain" description="Cytoplasmic" evidence="4">
    <location>
        <begin position="296"/>
        <end position="323"/>
    </location>
</feature>
<feature type="transmembrane region" description="Helical; Name=6" evidence="4">
    <location>
        <begin position="324"/>
        <end position="349"/>
    </location>
</feature>
<feature type="topological domain" description="Extracellular" evidence="4">
    <location>
        <begin position="350"/>
        <end position="361"/>
    </location>
</feature>
<feature type="transmembrane region" description="Helical; Name=7" evidence="4">
    <location>
        <begin position="362"/>
        <end position="388"/>
    </location>
</feature>
<feature type="topological domain" description="Cytoplasmic" evidence="4">
    <location>
        <begin position="389"/>
        <end position="441"/>
    </location>
</feature>
<feature type="region of interest" description="Disordered" evidence="6">
    <location>
        <begin position="30"/>
        <end position="90"/>
    </location>
</feature>
<feature type="compositionally biased region" description="Polar residues" evidence="6">
    <location>
        <begin position="47"/>
        <end position="65"/>
    </location>
</feature>
<feature type="modified residue" description="Phosphoserine" evidence="3">
    <location>
        <position position="304"/>
    </location>
</feature>
<feature type="modified residue" description="Phosphoserine" evidence="3">
    <location>
        <position position="418"/>
    </location>
</feature>
<feature type="modified residue" description="Phosphotyrosine" evidence="3">
    <location>
        <position position="438"/>
    </location>
</feature>
<feature type="modified residue" description="Phosphoserine" evidence="3">
    <location>
        <position position="439"/>
    </location>
</feature>
<feature type="modified residue" description="Phosphoserine" evidence="3">
    <location>
        <position position="440"/>
    </location>
</feature>
<feature type="modified residue" description="Phosphoserine" evidence="3">
    <location>
        <position position="441"/>
    </location>
</feature>
<feature type="lipid moiety-binding region" description="S-palmitoyl cysteine" evidence="1">
    <location>
        <position position="402"/>
    </location>
</feature>
<feature type="lipid moiety-binding region" description="S-palmitoyl cysteine" evidence="1">
    <location>
        <position position="404"/>
    </location>
</feature>
<feature type="glycosylation site" description="N-linked (GlcNAc...) asparagine" evidence="4">
    <location>
        <position position="60"/>
    </location>
</feature>
<feature type="disulfide bond" evidence="5">
    <location>
        <begin position="173"/>
        <end position="254"/>
    </location>
</feature>